<comment type="function">
    <text evidence="1">Together with the chaperonin GroEL, plays an essential role in assisting protein folding. The GroEL-GroES system forms a nano-cage that allows encapsulation of the non-native substrate proteins and provides a physical environment optimized to promote and accelerate protein folding. GroES binds to the apical surface of the GroEL ring, thereby capping the opening of the GroEL channel.</text>
</comment>
<comment type="subunit">
    <text evidence="1">Heptamer of 7 subunits arranged in a ring. Interacts with the chaperonin GroEL.</text>
</comment>
<comment type="subcellular location">
    <subcellularLocation>
        <location evidence="1">Cytoplasm</location>
    </subcellularLocation>
</comment>
<comment type="similarity">
    <text evidence="1 2">Belongs to the GroES chaperonin family.</text>
</comment>
<accession>P17204</accession>
<keyword id="KW-0143">Chaperone</keyword>
<keyword id="KW-0963">Cytoplasm</keyword>
<keyword id="KW-0346">Stress response</keyword>
<feature type="chain" id="PRO_0000174727" description="Co-chaperonin GroES">
    <location>
        <begin position="1"/>
        <end position="102"/>
    </location>
</feature>
<organism>
    <name type="scientific">Chlamydia muridarum (strain MoPn / Nigg)</name>
    <dbReference type="NCBI Taxonomy" id="243161"/>
    <lineage>
        <taxon>Bacteria</taxon>
        <taxon>Pseudomonadati</taxon>
        <taxon>Chlamydiota</taxon>
        <taxon>Chlamydiia</taxon>
        <taxon>Chlamydiales</taxon>
        <taxon>Chlamydiaceae</taxon>
        <taxon>Chlamydia/Chlamydophila group</taxon>
        <taxon>Chlamydia</taxon>
    </lineage>
</organism>
<reference key="1">
    <citation type="journal article" date="1994" name="Gene">
        <title>The sequence of the groES and groEL genes from the mouse pneumonitis agent of Chlamydia trachomatis.</title>
        <authorList>
            <person name="Ho Y."/>
            <person name="Zhang Y.-X."/>
        </authorList>
    </citation>
    <scope>NUCLEOTIDE SEQUENCE [GENOMIC DNA]</scope>
    <source>
        <strain>MoPn</strain>
    </source>
</reference>
<reference key="2">
    <citation type="journal article" date="1996" name="J. Bacteriol.">
        <title>Transcriptional organization and regulation of the dnaK and groE operons of Chlamydia trachomatis.</title>
        <authorList>
            <person name="Tan M."/>
            <person name="Wong B."/>
            <person name="Engel J.N."/>
        </authorList>
    </citation>
    <scope>NUCLEOTIDE SEQUENCE [GENOMIC DNA]</scope>
    <source>
        <strain>MoPn</strain>
    </source>
</reference>
<reference key="3">
    <citation type="journal article" date="2000" name="Nucleic Acids Res.">
        <title>Genome sequences of Chlamydia trachomatis MoPn and Chlamydia pneumoniae AR39.</title>
        <authorList>
            <person name="Read T.D."/>
            <person name="Brunham R.C."/>
            <person name="Shen C."/>
            <person name="Gill S.R."/>
            <person name="Heidelberg J.F."/>
            <person name="White O."/>
            <person name="Hickey E.K."/>
            <person name="Peterson J.D."/>
            <person name="Utterback T.R."/>
            <person name="Berry K.J."/>
            <person name="Bass S."/>
            <person name="Linher K.D."/>
            <person name="Weidman J.F."/>
            <person name="Khouri H.M."/>
            <person name="Craven B."/>
            <person name="Bowman C."/>
            <person name="Dodson R.J."/>
            <person name="Gwinn M.L."/>
            <person name="Nelson W.C."/>
            <person name="DeBoy R.T."/>
            <person name="Kolonay J.F."/>
            <person name="McClarty G."/>
            <person name="Salzberg S.L."/>
            <person name="Eisen J.A."/>
            <person name="Fraser C.M."/>
        </authorList>
    </citation>
    <scope>NUCLEOTIDE SEQUENCE [LARGE SCALE GENOMIC DNA]</scope>
    <source>
        <strain>MoPn / Nigg</strain>
    </source>
</reference>
<proteinExistence type="inferred from homology"/>
<dbReference type="EMBL" id="L12004">
    <property type="protein sequence ID" value="AAA19870.1"/>
    <property type="molecule type" value="Genomic_DNA"/>
</dbReference>
<dbReference type="EMBL" id="U52049">
    <property type="protein sequence ID" value="AAA97910.1"/>
    <property type="molecule type" value="Genomic_DNA"/>
</dbReference>
<dbReference type="EMBL" id="AE002160">
    <property type="protein sequence ID" value="AAF39244.1"/>
    <property type="molecule type" value="Genomic_DNA"/>
</dbReference>
<dbReference type="PIR" id="E81709">
    <property type="entry name" value="E81709"/>
</dbReference>
<dbReference type="RefSeq" id="WP_009872382.1">
    <property type="nucleotide sequence ID" value="NZ_CP063055.1"/>
</dbReference>
<dbReference type="SMR" id="P17204"/>
<dbReference type="KEGG" id="cmu:TC_0387"/>
<dbReference type="eggNOG" id="COG0234">
    <property type="taxonomic scope" value="Bacteria"/>
</dbReference>
<dbReference type="HOGENOM" id="CLU_132825_2_1_0"/>
<dbReference type="OrthoDB" id="9806791at2"/>
<dbReference type="Proteomes" id="UP000000800">
    <property type="component" value="Chromosome"/>
</dbReference>
<dbReference type="GO" id="GO:0005737">
    <property type="term" value="C:cytoplasm"/>
    <property type="evidence" value="ECO:0007669"/>
    <property type="project" value="UniProtKB-SubCell"/>
</dbReference>
<dbReference type="GO" id="GO:0005524">
    <property type="term" value="F:ATP binding"/>
    <property type="evidence" value="ECO:0007669"/>
    <property type="project" value="InterPro"/>
</dbReference>
<dbReference type="GO" id="GO:0046872">
    <property type="term" value="F:metal ion binding"/>
    <property type="evidence" value="ECO:0007669"/>
    <property type="project" value="TreeGrafter"/>
</dbReference>
<dbReference type="GO" id="GO:0044183">
    <property type="term" value="F:protein folding chaperone"/>
    <property type="evidence" value="ECO:0007669"/>
    <property type="project" value="InterPro"/>
</dbReference>
<dbReference type="GO" id="GO:0051087">
    <property type="term" value="F:protein-folding chaperone binding"/>
    <property type="evidence" value="ECO:0007669"/>
    <property type="project" value="TreeGrafter"/>
</dbReference>
<dbReference type="GO" id="GO:0051082">
    <property type="term" value="F:unfolded protein binding"/>
    <property type="evidence" value="ECO:0007669"/>
    <property type="project" value="TreeGrafter"/>
</dbReference>
<dbReference type="GO" id="GO:0051085">
    <property type="term" value="P:chaperone cofactor-dependent protein refolding"/>
    <property type="evidence" value="ECO:0007669"/>
    <property type="project" value="TreeGrafter"/>
</dbReference>
<dbReference type="CDD" id="cd00320">
    <property type="entry name" value="cpn10"/>
    <property type="match status" value="1"/>
</dbReference>
<dbReference type="FunFam" id="2.30.33.40:FF:000007">
    <property type="entry name" value="10 kDa chaperonin"/>
    <property type="match status" value="1"/>
</dbReference>
<dbReference type="Gene3D" id="2.30.33.40">
    <property type="entry name" value="GroES chaperonin"/>
    <property type="match status" value="1"/>
</dbReference>
<dbReference type="HAMAP" id="MF_00580">
    <property type="entry name" value="CH10"/>
    <property type="match status" value="1"/>
</dbReference>
<dbReference type="InterPro" id="IPR020818">
    <property type="entry name" value="Chaperonin_GroES"/>
</dbReference>
<dbReference type="InterPro" id="IPR037124">
    <property type="entry name" value="Chaperonin_GroES_sf"/>
</dbReference>
<dbReference type="InterPro" id="IPR018369">
    <property type="entry name" value="Chaprnonin_Cpn10_CS"/>
</dbReference>
<dbReference type="InterPro" id="IPR011032">
    <property type="entry name" value="GroES-like_sf"/>
</dbReference>
<dbReference type="NCBIfam" id="NF001531">
    <property type="entry name" value="PRK00364.2-2"/>
    <property type="match status" value="1"/>
</dbReference>
<dbReference type="NCBIfam" id="NF001533">
    <property type="entry name" value="PRK00364.2-4"/>
    <property type="match status" value="1"/>
</dbReference>
<dbReference type="PANTHER" id="PTHR10772">
    <property type="entry name" value="10 KDA HEAT SHOCK PROTEIN"/>
    <property type="match status" value="1"/>
</dbReference>
<dbReference type="PANTHER" id="PTHR10772:SF58">
    <property type="entry name" value="CO-CHAPERONIN GROES"/>
    <property type="match status" value="1"/>
</dbReference>
<dbReference type="Pfam" id="PF00166">
    <property type="entry name" value="Cpn10"/>
    <property type="match status" value="1"/>
</dbReference>
<dbReference type="PRINTS" id="PR00297">
    <property type="entry name" value="CHAPERONIN10"/>
</dbReference>
<dbReference type="SMART" id="SM00883">
    <property type="entry name" value="Cpn10"/>
    <property type="match status" value="1"/>
</dbReference>
<dbReference type="SUPFAM" id="SSF50129">
    <property type="entry name" value="GroES-like"/>
    <property type="match status" value="1"/>
</dbReference>
<dbReference type="PROSITE" id="PS00681">
    <property type="entry name" value="CHAPERONINS_CPN10"/>
    <property type="match status" value="1"/>
</dbReference>
<gene>
    <name evidence="1" type="primary">groES</name>
    <name evidence="1" type="synonym">groS</name>
    <name type="synonym">hypA</name>
    <name type="synonym">mopB</name>
    <name type="ordered locus">TC_0387</name>
</gene>
<sequence length="102" mass="11183">MSDQATTLKIKPLGDRILVKREEEASTARGGIILPDTAKKKQDRAEVLALGTGKKDDKGQQLPFEVQVGDIVLIDKYSGQELTVEGEEYVIVQMSEVIAVLQ</sequence>
<protein>
    <recommendedName>
        <fullName evidence="1">Co-chaperonin GroES</fullName>
    </recommendedName>
    <alternativeName>
        <fullName evidence="1">10 kDa chaperonin</fullName>
    </alternativeName>
    <alternativeName>
        <fullName>11.2 kDa stress response protein</fullName>
    </alternativeName>
    <alternativeName>
        <fullName evidence="1">Chaperonin-10</fullName>
        <shortName evidence="1">Cpn10</shortName>
    </alternativeName>
    <alternativeName>
        <fullName>Heat shock protein 10</fullName>
        <shortName>HSP10</shortName>
    </alternativeName>
</protein>
<evidence type="ECO:0000255" key="1">
    <source>
        <dbReference type="HAMAP-Rule" id="MF_00580"/>
    </source>
</evidence>
<evidence type="ECO:0000305" key="2"/>
<name>CH10_CHLMU</name>